<name>GLMM_HAEDU</name>
<protein>
    <recommendedName>
        <fullName evidence="1">Phosphoglucosamine mutase</fullName>
        <ecNumber evidence="1">5.4.2.10</ecNumber>
    </recommendedName>
</protein>
<accession>Q7VP94</accession>
<comment type="function">
    <text evidence="1">Catalyzes the conversion of glucosamine-6-phosphate to glucosamine-1-phosphate.</text>
</comment>
<comment type="catalytic activity">
    <reaction evidence="1">
        <text>alpha-D-glucosamine 1-phosphate = D-glucosamine 6-phosphate</text>
        <dbReference type="Rhea" id="RHEA:23424"/>
        <dbReference type="ChEBI" id="CHEBI:58516"/>
        <dbReference type="ChEBI" id="CHEBI:58725"/>
        <dbReference type="EC" id="5.4.2.10"/>
    </reaction>
</comment>
<comment type="cofactor">
    <cofactor evidence="1">
        <name>Mg(2+)</name>
        <dbReference type="ChEBI" id="CHEBI:18420"/>
    </cofactor>
    <text evidence="1">Binds 1 Mg(2+) ion per subunit.</text>
</comment>
<comment type="PTM">
    <text evidence="1">Activated by phosphorylation.</text>
</comment>
<comment type="similarity">
    <text evidence="1">Belongs to the phosphohexose mutase family.</text>
</comment>
<organism>
    <name type="scientific">Haemophilus ducreyi (strain 35000HP / ATCC 700724)</name>
    <dbReference type="NCBI Taxonomy" id="233412"/>
    <lineage>
        <taxon>Bacteria</taxon>
        <taxon>Pseudomonadati</taxon>
        <taxon>Pseudomonadota</taxon>
        <taxon>Gammaproteobacteria</taxon>
        <taxon>Pasteurellales</taxon>
        <taxon>Pasteurellaceae</taxon>
        <taxon>Haemophilus</taxon>
    </lineage>
</organism>
<sequence>MAERKYFGTDGVRGKVGQFPITPDFALKLGWAAGKILATQGTKQVLIGKDTRISGYMLESALEAGLAAAGLSAAFVGPMPTPAVAYLTRTFRAEAGIVISASHNPYYDNGIKFFSANGEKLPDEVEEAIEALLDQPMDYVESDQLGKAIRINDAAGRYIEFCKGTFPADASLKGYKIVVDCAHGATYHIAPNVMRELGAEVIEIGTHPNGLNINDKCGATDISALQQAVLTSKADLGVAYDGDGDRIIMVDHLGNKVDGDQILFIIAREALRSGKLKGGVVGTLMSNMGLEIALKHLAIPFTRANVGDRYVLEQLKEKNWKLGGENSGHIIVLDKNTTGDGIIASLEVLAAMEAHKMSLNDLTHAVPLFPQVLLNVRFDGGNNPLENAAVKALAKDIETRLVGKGRILLRKSGTEPLIRVMVECEDAVLAQQYAEEIVSAIQNH</sequence>
<proteinExistence type="inferred from homology"/>
<evidence type="ECO:0000255" key="1">
    <source>
        <dbReference type="HAMAP-Rule" id="MF_01554"/>
    </source>
</evidence>
<gene>
    <name evidence="1" type="primary">glmM</name>
    <name type="ordered locus">HD_0201</name>
</gene>
<dbReference type="EC" id="5.4.2.10" evidence="1"/>
<dbReference type="EMBL" id="AE017143">
    <property type="protein sequence ID" value="AAP95193.1"/>
    <property type="molecule type" value="Genomic_DNA"/>
</dbReference>
<dbReference type="RefSeq" id="WP_010944247.1">
    <property type="nucleotide sequence ID" value="NC_002940.2"/>
</dbReference>
<dbReference type="SMR" id="Q7VP94"/>
<dbReference type="STRING" id="233412.HD_0201"/>
<dbReference type="DNASU" id="1490210"/>
<dbReference type="KEGG" id="hdu:HD_0201"/>
<dbReference type="eggNOG" id="COG1109">
    <property type="taxonomic scope" value="Bacteria"/>
</dbReference>
<dbReference type="HOGENOM" id="CLU_016950_7_0_6"/>
<dbReference type="OrthoDB" id="9803322at2"/>
<dbReference type="Proteomes" id="UP000001022">
    <property type="component" value="Chromosome"/>
</dbReference>
<dbReference type="GO" id="GO:0005829">
    <property type="term" value="C:cytosol"/>
    <property type="evidence" value="ECO:0007669"/>
    <property type="project" value="TreeGrafter"/>
</dbReference>
<dbReference type="GO" id="GO:0000287">
    <property type="term" value="F:magnesium ion binding"/>
    <property type="evidence" value="ECO:0007669"/>
    <property type="project" value="UniProtKB-UniRule"/>
</dbReference>
<dbReference type="GO" id="GO:0008966">
    <property type="term" value="F:phosphoglucosamine mutase activity"/>
    <property type="evidence" value="ECO:0007669"/>
    <property type="project" value="UniProtKB-UniRule"/>
</dbReference>
<dbReference type="GO" id="GO:0004615">
    <property type="term" value="F:phosphomannomutase activity"/>
    <property type="evidence" value="ECO:0007669"/>
    <property type="project" value="TreeGrafter"/>
</dbReference>
<dbReference type="GO" id="GO:0005975">
    <property type="term" value="P:carbohydrate metabolic process"/>
    <property type="evidence" value="ECO:0007669"/>
    <property type="project" value="InterPro"/>
</dbReference>
<dbReference type="GO" id="GO:0009252">
    <property type="term" value="P:peptidoglycan biosynthetic process"/>
    <property type="evidence" value="ECO:0007669"/>
    <property type="project" value="TreeGrafter"/>
</dbReference>
<dbReference type="GO" id="GO:0006048">
    <property type="term" value="P:UDP-N-acetylglucosamine biosynthetic process"/>
    <property type="evidence" value="ECO:0007669"/>
    <property type="project" value="TreeGrafter"/>
</dbReference>
<dbReference type="CDD" id="cd05802">
    <property type="entry name" value="GlmM"/>
    <property type="match status" value="1"/>
</dbReference>
<dbReference type="FunFam" id="3.30.310.50:FF:000001">
    <property type="entry name" value="Phosphoglucosamine mutase"/>
    <property type="match status" value="1"/>
</dbReference>
<dbReference type="FunFam" id="3.40.120.10:FF:000001">
    <property type="entry name" value="Phosphoglucosamine mutase"/>
    <property type="match status" value="1"/>
</dbReference>
<dbReference type="FunFam" id="3.40.120.10:FF:000002">
    <property type="entry name" value="Phosphoglucosamine mutase"/>
    <property type="match status" value="1"/>
</dbReference>
<dbReference type="Gene3D" id="3.40.120.10">
    <property type="entry name" value="Alpha-D-Glucose-1,6-Bisphosphate, subunit A, domain 3"/>
    <property type="match status" value="3"/>
</dbReference>
<dbReference type="Gene3D" id="3.30.310.50">
    <property type="entry name" value="Alpha-D-phosphohexomutase, C-terminal domain"/>
    <property type="match status" value="1"/>
</dbReference>
<dbReference type="HAMAP" id="MF_01554_B">
    <property type="entry name" value="GlmM_B"/>
    <property type="match status" value="1"/>
</dbReference>
<dbReference type="InterPro" id="IPR005844">
    <property type="entry name" value="A-D-PHexomutase_a/b/a-I"/>
</dbReference>
<dbReference type="InterPro" id="IPR016055">
    <property type="entry name" value="A-D-PHexomutase_a/b/a-I/II/III"/>
</dbReference>
<dbReference type="InterPro" id="IPR005845">
    <property type="entry name" value="A-D-PHexomutase_a/b/a-II"/>
</dbReference>
<dbReference type="InterPro" id="IPR005846">
    <property type="entry name" value="A-D-PHexomutase_a/b/a-III"/>
</dbReference>
<dbReference type="InterPro" id="IPR005843">
    <property type="entry name" value="A-D-PHexomutase_C"/>
</dbReference>
<dbReference type="InterPro" id="IPR036900">
    <property type="entry name" value="A-D-PHexomutase_C_sf"/>
</dbReference>
<dbReference type="InterPro" id="IPR016066">
    <property type="entry name" value="A-D-PHexomutase_CS"/>
</dbReference>
<dbReference type="InterPro" id="IPR005841">
    <property type="entry name" value="Alpha-D-phosphohexomutase_SF"/>
</dbReference>
<dbReference type="InterPro" id="IPR006352">
    <property type="entry name" value="GlmM_bact"/>
</dbReference>
<dbReference type="InterPro" id="IPR050060">
    <property type="entry name" value="Phosphoglucosamine_mutase"/>
</dbReference>
<dbReference type="NCBIfam" id="TIGR01455">
    <property type="entry name" value="glmM"/>
    <property type="match status" value="1"/>
</dbReference>
<dbReference type="NCBIfam" id="NF008139">
    <property type="entry name" value="PRK10887.1"/>
    <property type="match status" value="1"/>
</dbReference>
<dbReference type="PANTHER" id="PTHR42946:SF1">
    <property type="entry name" value="PHOSPHOGLUCOMUTASE (ALPHA-D-GLUCOSE-1,6-BISPHOSPHATE-DEPENDENT)"/>
    <property type="match status" value="1"/>
</dbReference>
<dbReference type="PANTHER" id="PTHR42946">
    <property type="entry name" value="PHOSPHOHEXOSE MUTASE"/>
    <property type="match status" value="1"/>
</dbReference>
<dbReference type="Pfam" id="PF02878">
    <property type="entry name" value="PGM_PMM_I"/>
    <property type="match status" value="1"/>
</dbReference>
<dbReference type="Pfam" id="PF02879">
    <property type="entry name" value="PGM_PMM_II"/>
    <property type="match status" value="1"/>
</dbReference>
<dbReference type="Pfam" id="PF02880">
    <property type="entry name" value="PGM_PMM_III"/>
    <property type="match status" value="1"/>
</dbReference>
<dbReference type="Pfam" id="PF00408">
    <property type="entry name" value="PGM_PMM_IV"/>
    <property type="match status" value="1"/>
</dbReference>
<dbReference type="PRINTS" id="PR00509">
    <property type="entry name" value="PGMPMM"/>
</dbReference>
<dbReference type="SUPFAM" id="SSF55957">
    <property type="entry name" value="Phosphoglucomutase, C-terminal domain"/>
    <property type="match status" value="1"/>
</dbReference>
<dbReference type="SUPFAM" id="SSF53738">
    <property type="entry name" value="Phosphoglucomutase, first 3 domains"/>
    <property type="match status" value="3"/>
</dbReference>
<dbReference type="PROSITE" id="PS00710">
    <property type="entry name" value="PGM_PMM"/>
    <property type="match status" value="1"/>
</dbReference>
<keyword id="KW-0413">Isomerase</keyword>
<keyword id="KW-0460">Magnesium</keyword>
<keyword id="KW-0479">Metal-binding</keyword>
<keyword id="KW-0597">Phosphoprotein</keyword>
<keyword id="KW-1185">Reference proteome</keyword>
<reference key="1">
    <citation type="submission" date="2003-06" db="EMBL/GenBank/DDBJ databases">
        <title>The complete genome sequence of Haemophilus ducreyi.</title>
        <authorList>
            <person name="Munson R.S. Jr."/>
            <person name="Ray W.C."/>
            <person name="Mahairas G."/>
            <person name="Sabo P."/>
            <person name="Mungur R."/>
            <person name="Johnson L."/>
            <person name="Nguyen D."/>
            <person name="Wang J."/>
            <person name="Forst C."/>
            <person name="Hood L."/>
        </authorList>
    </citation>
    <scope>NUCLEOTIDE SEQUENCE [LARGE SCALE GENOMIC DNA]</scope>
    <source>
        <strain>35000HP / ATCC 700724</strain>
    </source>
</reference>
<feature type="chain" id="PRO_0000147895" description="Phosphoglucosamine mutase">
    <location>
        <begin position="1"/>
        <end position="444"/>
    </location>
</feature>
<feature type="active site" description="Phosphoserine intermediate" evidence="1">
    <location>
        <position position="102"/>
    </location>
</feature>
<feature type="binding site" description="via phosphate group" evidence="1">
    <location>
        <position position="102"/>
    </location>
    <ligand>
        <name>Mg(2+)</name>
        <dbReference type="ChEBI" id="CHEBI:18420"/>
    </ligand>
</feature>
<feature type="binding site" evidence="1">
    <location>
        <position position="241"/>
    </location>
    <ligand>
        <name>Mg(2+)</name>
        <dbReference type="ChEBI" id="CHEBI:18420"/>
    </ligand>
</feature>
<feature type="binding site" evidence="1">
    <location>
        <position position="243"/>
    </location>
    <ligand>
        <name>Mg(2+)</name>
        <dbReference type="ChEBI" id="CHEBI:18420"/>
    </ligand>
</feature>
<feature type="binding site" evidence="1">
    <location>
        <position position="245"/>
    </location>
    <ligand>
        <name>Mg(2+)</name>
        <dbReference type="ChEBI" id="CHEBI:18420"/>
    </ligand>
</feature>
<feature type="modified residue" description="Phosphoserine" evidence="1">
    <location>
        <position position="102"/>
    </location>
</feature>